<proteinExistence type="inferred from homology"/>
<gene>
    <name evidence="1" type="primary">apt</name>
    <name type="ordered locus">KPN78578_04420</name>
    <name type="ORF">KPN_00451</name>
</gene>
<keyword id="KW-0963">Cytoplasm</keyword>
<keyword id="KW-0328">Glycosyltransferase</keyword>
<keyword id="KW-0660">Purine salvage</keyword>
<keyword id="KW-0808">Transferase</keyword>
<reference key="1">
    <citation type="submission" date="2006-09" db="EMBL/GenBank/DDBJ databases">
        <authorList>
            <consortium name="The Klebsiella pneumonia Genome Sequencing Project"/>
            <person name="McClelland M."/>
            <person name="Sanderson E.K."/>
            <person name="Spieth J."/>
            <person name="Clifton W.S."/>
            <person name="Latreille P."/>
            <person name="Sabo A."/>
            <person name="Pepin K."/>
            <person name="Bhonagiri V."/>
            <person name="Porwollik S."/>
            <person name="Ali J."/>
            <person name="Wilson R.K."/>
        </authorList>
    </citation>
    <scope>NUCLEOTIDE SEQUENCE [LARGE SCALE GENOMIC DNA]</scope>
    <source>
        <strain>ATCC 700721 / MGH 78578</strain>
    </source>
</reference>
<protein>
    <recommendedName>
        <fullName evidence="1">Adenine phosphoribosyltransferase</fullName>
        <shortName evidence="1">APRT</shortName>
        <ecNumber evidence="1">2.4.2.7</ecNumber>
    </recommendedName>
</protein>
<comment type="function">
    <text evidence="1">Catalyzes a salvage reaction resulting in the formation of AMP, that is energically less costly than de novo synthesis.</text>
</comment>
<comment type="catalytic activity">
    <reaction evidence="1">
        <text>AMP + diphosphate = 5-phospho-alpha-D-ribose 1-diphosphate + adenine</text>
        <dbReference type="Rhea" id="RHEA:16609"/>
        <dbReference type="ChEBI" id="CHEBI:16708"/>
        <dbReference type="ChEBI" id="CHEBI:33019"/>
        <dbReference type="ChEBI" id="CHEBI:58017"/>
        <dbReference type="ChEBI" id="CHEBI:456215"/>
        <dbReference type="EC" id="2.4.2.7"/>
    </reaction>
</comment>
<comment type="pathway">
    <text evidence="1">Purine metabolism; AMP biosynthesis via salvage pathway; AMP from adenine: step 1/1.</text>
</comment>
<comment type="subunit">
    <text evidence="1">Homodimer.</text>
</comment>
<comment type="subcellular location">
    <subcellularLocation>
        <location evidence="1">Cytoplasm</location>
    </subcellularLocation>
</comment>
<comment type="similarity">
    <text evidence="1">Belongs to the purine/pyrimidine phosphoribosyltransferase family.</text>
</comment>
<dbReference type="EC" id="2.4.2.7" evidence="1"/>
<dbReference type="EMBL" id="CP000647">
    <property type="protein sequence ID" value="ABR75903.1"/>
    <property type="molecule type" value="Genomic_DNA"/>
</dbReference>
<dbReference type="RefSeq" id="WP_002892145.1">
    <property type="nucleotide sequence ID" value="NC_009648.1"/>
</dbReference>
<dbReference type="SMR" id="A6T5N2"/>
<dbReference type="STRING" id="272620.KPN_00451"/>
<dbReference type="jPOST" id="A6T5N2"/>
<dbReference type="PaxDb" id="272620-KPN_00451"/>
<dbReference type="EnsemblBacteria" id="ABR75903">
    <property type="protein sequence ID" value="ABR75903"/>
    <property type="gene ID" value="KPN_00451"/>
</dbReference>
<dbReference type="KEGG" id="kpn:KPN_00451"/>
<dbReference type="HOGENOM" id="CLU_063339_3_0_6"/>
<dbReference type="UniPathway" id="UPA00588">
    <property type="reaction ID" value="UER00646"/>
</dbReference>
<dbReference type="Proteomes" id="UP000000265">
    <property type="component" value="Chromosome"/>
</dbReference>
<dbReference type="GO" id="GO:0005829">
    <property type="term" value="C:cytosol"/>
    <property type="evidence" value="ECO:0007669"/>
    <property type="project" value="TreeGrafter"/>
</dbReference>
<dbReference type="GO" id="GO:0003999">
    <property type="term" value="F:adenine phosphoribosyltransferase activity"/>
    <property type="evidence" value="ECO:0007669"/>
    <property type="project" value="UniProtKB-UniRule"/>
</dbReference>
<dbReference type="GO" id="GO:0006168">
    <property type="term" value="P:adenine salvage"/>
    <property type="evidence" value="ECO:0007669"/>
    <property type="project" value="InterPro"/>
</dbReference>
<dbReference type="GO" id="GO:0044209">
    <property type="term" value="P:AMP salvage"/>
    <property type="evidence" value="ECO:0007669"/>
    <property type="project" value="UniProtKB-UniRule"/>
</dbReference>
<dbReference type="GO" id="GO:0006166">
    <property type="term" value="P:purine ribonucleoside salvage"/>
    <property type="evidence" value="ECO:0007669"/>
    <property type="project" value="UniProtKB-KW"/>
</dbReference>
<dbReference type="CDD" id="cd06223">
    <property type="entry name" value="PRTases_typeI"/>
    <property type="match status" value="1"/>
</dbReference>
<dbReference type="FunFam" id="3.40.50.2020:FF:000004">
    <property type="entry name" value="Adenine phosphoribosyltransferase"/>
    <property type="match status" value="1"/>
</dbReference>
<dbReference type="Gene3D" id="3.40.50.2020">
    <property type="match status" value="1"/>
</dbReference>
<dbReference type="HAMAP" id="MF_00004">
    <property type="entry name" value="Aden_phosphoribosyltr"/>
    <property type="match status" value="1"/>
</dbReference>
<dbReference type="InterPro" id="IPR005764">
    <property type="entry name" value="Ade_phspho_trans"/>
</dbReference>
<dbReference type="InterPro" id="IPR050120">
    <property type="entry name" value="Adenine_PRTase"/>
</dbReference>
<dbReference type="InterPro" id="IPR000836">
    <property type="entry name" value="PRibTrfase_dom"/>
</dbReference>
<dbReference type="InterPro" id="IPR029057">
    <property type="entry name" value="PRTase-like"/>
</dbReference>
<dbReference type="NCBIfam" id="TIGR01090">
    <property type="entry name" value="apt"/>
    <property type="match status" value="1"/>
</dbReference>
<dbReference type="NCBIfam" id="NF002632">
    <property type="entry name" value="PRK02304.1-1"/>
    <property type="match status" value="1"/>
</dbReference>
<dbReference type="NCBIfam" id="NF002633">
    <property type="entry name" value="PRK02304.1-2"/>
    <property type="match status" value="1"/>
</dbReference>
<dbReference type="NCBIfam" id="NF002634">
    <property type="entry name" value="PRK02304.1-3"/>
    <property type="match status" value="1"/>
</dbReference>
<dbReference type="NCBIfam" id="NF002636">
    <property type="entry name" value="PRK02304.1-5"/>
    <property type="match status" value="1"/>
</dbReference>
<dbReference type="PANTHER" id="PTHR11776">
    <property type="entry name" value="ADENINE PHOSPHORIBOSYLTRANSFERASE"/>
    <property type="match status" value="1"/>
</dbReference>
<dbReference type="PANTHER" id="PTHR11776:SF7">
    <property type="entry name" value="PHOSPHORIBOSYLTRANSFERASE DOMAIN-CONTAINING PROTEIN"/>
    <property type="match status" value="1"/>
</dbReference>
<dbReference type="Pfam" id="PF00156">
    <property type="entry name" value="Pribosyltran"/>
    <property type="match status" value="1"/>
</dbReference>
<dbReference type="SUPFAM" id="SSF53271">
    <property type="entry name" value="PRTase-like"/>
    <property type="match status" value="1"/>
</dbReference>
<dbReference type="PROSITE" id="PS00103">
    <property type="entry name" value="PUR_PYR_PR_TRANSFER"/>
    <property type="match status" value="1"/>
</dbReference>
<accession>A6T5N2</accession>
<feature type="chain" id="PRO_1000000297" description="Adenine phosphoribosyltransferase">
    <location>
        <begin position="1"/>
        <end position="183"/>
    </location>
</feature>
<evidence type="ECO:0000255" key="1">
    <source>
        <dbReference type="HAMAP-Rule" id="MF_00004"/>
    </source>
</evidence>
<organism>
    <name type="scientific">Klebsiella pneumoniae subsp. pneumoniae (strain ATCC 700721 / MGH 78578)</name>
    <dbReference type="NCBI Taxonomy" id="272620"/>
    <lineage>
        <taxon>Bacteria</taxon>
        <taxon>Pseudomonadati</taxon>
        <taxon>Pseudomonadota</taxon>
        <taxon>Gammaproteobacteria</taxon>
        <taxon>Enterobacterales</taxon>
        <taxon>Enterobacteriaceae</taxon>
        <taxon>Klebsiella/Raoultella group</taxon>
        <taxon>Klebsiella</taxon>
        <taxon>Klebsiella pneumoniae complex</taxon>
    </lineage>
</organism>
<name>APT_KLEP7</name>
<sequence length="183" mass="20077">MTATAQQLEYLKNSIQSIEDYPKPGILFRDVTSLLEDPKAYALSIELLTERYKDAGITKVVGTEARGFLFGAPVALALGVGFVPVRKPRKLPRETIAETYELEYGTDQLEIHVDAIKPGDKVLVVDDLLATGGTIDATVKLIRRLGGEVHDAAFIINLFDLGGEQRLEKLGIHCYSLVPFPGH</sequence>